<dbReference type="EC" id="3.4.21.92" evidence="1"/>
<dbReference type="EMBL" id="CP000034">
    <property type="protein sequence ID" value="ABB60514.1"/>
    <property type="molecule type" value="Genomic_DNA"/>
</dbReference>
<dbReference type="RefSeq" id="WP_000122253.1">
    <property type="nucleotide sequence ID" value="NC_007606.1"/>
</dbReference>
<dbReference type="RefSeq" id="YP_402003.1">
    <property type="nucleotide sequence ID" value="NC_007606.1"/>
</dbReference>
<dbReference type="SMR" id="Q32JJ3"/>
<dbReference type="STRING" id="300267.SDY_0295"/>
<dbReference type="MEROPS" id="S14.001"/>
<dbReference type="EnsemblBacteria" id="ABB60514">
    <property type="protein sequence ID" value="ABB60514"/>
    <property type="gene ID" value="SDY_0295"/>
</dbReference>
<dbReference type="GeneID" id="93777017"/>
<dbReference type="KEGG" id="sdy:SDY_0295"/>
<dbReference type="PATRIC" id="fig|300267.13.peg.340"/>
<dbReference type="HOGENOM" id="CLU_058707_3_2_6"/>
<dbReference type="Proteomes" id="UP000002716">
    <property type="component" value="Chromosome"/>
</dbReference>
<dbReference type="GO" id="GO:0005737">
    <property type="term" value="C:cytoplasm"/>
    <property type="evidence" value="ECO:0007669"/>
    <property type="project" value="UniProtKB-SubCell"/>
</dbReference>
<dbReference type="GO" id="GO:0009368">
    <property type="term" value="C:endopeptidase Clp complex"/>
    <property type="evidence" value="ECO:0007669"/>
    <property type="project" value="TreeGrafter"/>
</dbReference>
<dbReference type="GO" id="GO:0004176">
    <property type="term" value="F:ATP-dependent peptidase activity"/>
    <property type="evidence" value="ECO:0007669"/>
    <property type="project" value="InterPro"/>
</dbReference>
<dbReference type="GO" id="GO:0051117">
    <property type="term" value="F:ATPase binding"/>
    <property type="evidence" value="ECO:0007669"/>
    <property type="project" value="TreeGrafter"/>
</dbReference>
<dbReference type="GO" id="GO:0004252">
    <property type="term" value="F:serine-type endopeptidase activity"/>
    <property type="evidence" value="ECO:0007669"/>
    <property type="project" value="UniProtKB-UniRule"/>
</dbReference>
<dbReference type="GO" id="GO:0006515">
    <property type="term" value="P:protein quality control for misfolded or incompletely synthesized proteins"/>
    <property type="evidence" value="ECO:0007669"/>
    <property type="project" value="TreeGrafter"/>
</dbReference>
<dbReference type="CDD" id="cd07017">
    <property type="entry name" value="S14_ClpP_2"/>
    <property type="match status" value="1"/>
</dbReference>
<dbReference type="FunFam" id="3.90.226.10:FF:000001">
    <property type="entry name" value="ATP-dependent Clp protease proteolytic subunit"/>
    <property type="match status" value="1"/>
</dbReference>
<dbReference type="Gene3D" id="3.90.226.10">
    <property type="entry name" value="2-enoyl-CoA Hydratase, Chain A, domain 1"/>
    <property type="match status" value="1"/>
</dbReference>
<dbReference type="HAMAP" id="MF_00444">
    <property type="entry name" value="ClpP"/>
    <property type="match status" value="1"/>
</dbReference>
<dbReference type="InterPro" id="IPR001907">
    <property type="entry name" value="ClpP"/>
</dbReference>
<dbReference type="InterPro" id="IPR029045">
    <property type="entry name" value="ClpP/crotonase-like_dom_sf"/>
</dbReference>
<dbReference type="InterPro" id="IPR023562">
    <property type="entry name" value="ClpP/TepA"/>
</dbReference>
<dbReference type="InterPro" id="IPR033135">
    <property type="entry name" value="ClpP_His_AS"/>
</dbReference>
<dbReference type="InterPro" id="IPR018215">
    <property type="entry name" value="ClpP_Ser_AS"/>
</dbReference>
<dbReference type="NCBIfam" id="TIGR00493">
    <property type="entry name" value="clpP"/>
    <property type="match status" value="1"/>
</dbReference>
<dbReference type="NCBIfam" id="NF001368">
    <property type="entry name" value="PRK00277.1"/>
    <property type="match status" value="1"/>
</dbReference>
<dbReference type="NCBIfam" id="NF009205">
    <property type="entry name" value="PRK12553.1"/>
    <property type="match status" value="1"/>
</dbReference>
<dbReference type="PANTHER" id="PTHR10381">
    <property type="entry name" value="ATP-DEPENDENT CLP PROTEASE PROTEOLYTIC SUBUNIT"/>
    <property type="match status" value="1"/>
</dbReference>
<dbReference type="PANTHER" id="PTHR10381:SF70">
    <property type="entry name" value="ATP-DEPENDENT CLP PROTEASE PROTEOLYTIC SUBUNIT"/>
    <property type="match status" value="1"/>
</dbReference>
<dbReference type="Pfam" id="PF00574">
    <property type="entry name" value="CLP_protease"/>
    <property type="match status" value="1"/>
</dbReference>
<dbReference type="PRINTS" id="PR00127">
    <property type="entry name" value="CLPPROTEASEP"/>
</dbReference>
<dbReference type="SUPFAM" id="SSF52096">
    <property type="entry name" value="ClpP/crotonase"/>
    <property type="match status" value="1"/>
</dbReference>
<dbReference type="PROSITE" id="PS00382">
    <property type="entry name" value="CLP_PROTEASE_HIS"/>
    <property type="match status" value="1"/>
</dbReference>
<dbReference type="PROSITE" id="PS00381">
    <property type="entry name" value="CLP_PROTEASE_SER"/>
    <property type="match status" value="1"/>
</dbReference>
<organism>
    <name type="scientific">Shigella dysenteriae serotype 1 (strain Sd197)</name>
    <dbReference type="NCBI Taxonomy" id="300267"/>
    <lineage>
        <taxon>Bacteria</taxon>
        <taxon>Pseudomonadati</taxon>
        <taxon>Pseudomonadota</taxon>
        <taxon>Gammaproteobacteria</taxon>
        <taxon>Enterobacterales</taxon>
        <taxon>Enterobacteriaceae</taxon>
        <taxon>Shigella</taxon>
    </lineage>
</organism>
<sequence>MSYSGERDNFAPHMALVPMVIEQTSRGERSFDIYSRLLKERVIFLTGQVEDHMANLIVAQMLFLEAENPEKDIYLYINSPGGVITAGMSIYDTMQFIKPDVSTICMGQAASMGAFLLTAGAKGKRFCLPNSRVMIHQPLGGYQGQATDIEIHAREILKVKGRMNELMALHTGQSLEQIERDTERDRFLSAPEAVEYGLVDSILTHRN</sequence>
<name>CLPP_SHIDS</name>
<feature type="chain" id="PRO_0000226468" description="ATP-dependent Clp protease proteolytic subunit">
    <location>
        <begin position="1"/>
        <end position="207"/>
    </location>
</feature>
<feature type="active site" description="Nucleophile" evidence="1">
    <location>
        <position position="111"/>
    </location>
</feature>
<feature type="active site" evidence="1">
    <location>
        <position position="136"/>
    </location>
</feature>
<gene>
    <name evidence="1" type="primary">clpP</name>
    <name type="ordered locus">SDY_0295</name>
</gene>
<accession>Q32JJ3</accession>
<comment type="function">
    <text evidence="1">Cleaves peptides in various proteins in a process that requires ATP hydrolysis. Has a chymotrypsin-like activity. Plays a major role in the degradation of misfolded proteins.</text>
</comment>
<comment type="catalytic activity">
    <reaction evidence="1">
        <text>Hydrolysis of proteins to small peptides in the presence of ATP and magnesium. alpha-casein is the usual test substrate. In the absence of ATP, only oligopeptides shorter than five residues are hydrolyzed (such as succinyl-Leu-Tyr-|-NHMec, and Leu-Tyr-Leu-|-Tyr-Trp, in which cleavage of the -Tyr-|-Leu- and -Tyr-|-Trp bonds also occurs).</text>
        <dbReference type="EC" id="3.4.21.92"/>
    </reaction>
</comment>
<comment type="subunit">
    <text evidence="1">Fourteen ClpP subunits assemble into 2 heptameric rings which stack back to back to give a disk-like structure with a central cavity, resembling the structure of eukaryotic proteasomes. Component of the ClpAP and ClpXP complexes.</text>
</comment>
<comment type="subcellular location">
    <subcellularLocation>
        <location evidence="1">Cytoplasm</location>
    </subcellularLocation>
</comment>
<comment type="similarity">
    <text evidence="1">Belongs to the peptidase S14 family.</text>
</comment>
<evidence type="ECO:0000255" key="1">
    <source>
        <dbReference type="HAMAP-Rule" id="MF_00444"/>
    </source>
</evidence>
<reference key="1">
    <citation type="journal article" date="2005" name="Nucleic Acids Res.">
        <title>Genome dynamics and diversity of Shigella species, the etiologic agents of bacillary dysentery.</title>
        <authorList>
            <person name="Yang F."/>
            <person name="Yang J."/>
            <person name="Zhang X."/>
            <person name="Chen L."/>
            <person name="Jiang Y."/>
            <person name="Yan Y."/>
            <person name="Tang X."/>
            <person name="Wang J."/>
            <person name="Xiong Z."/>
            <person name="Dong J."/>
            <person name="Xue Y."/>
            <person name="Zhu Y."/>
            <person name="Xu X."/>
            <person name="Sun L."/>
            <person name="Chen S."/>
            <person name="Nie H."/>
            <person name="Peng J."/>
            <person name="Xu J."/>
            <person name="Wang Y."/>
            <person name="Yuan Z."/>
            <person name="Wen Y."/>
            <person name="Yao Z."/>
            <person name="Shen Y."/>
            <person name="Qiang B."/>
            <person name="Hou Y."/>
            <person name="Yu J."/>
            <person name="Jin Q."/>
        </authorList>
    </citation>
    <scope>NUCLEOTIDE SEQUENCE [LARGE SCALE GENOMIC DNA]</scope>
    <source>
        <strain>Sd197</strain>
    </source>
</reference>
<protein>
    <recommendedName>
        <fullName evidence="1">ATP-dependent Clp protease proteolytic subunit</fullName>
        <ecNumber evidence="1">3.4.21.92</ecNumber>
    </recommendedName>
    <alternativeName>
        <fullName evidence="1">Endopeptidase Clp</fullName>
    </alternativeName>
</protein>
<proteinExistence type="inferred from homology"/>
<keyword id="KW-0963">Cytoplasm</keyword>
<keyword id="KW-0378">Hydrolase</keyword>
<keyword id="KW-0645">Protease</keyword>
<keyword id="KW-1185">Reference proteome</keyword>
<keyword id="KW-0720">Serine protease</keyword>